<reference key="1">
    <citation type="journal article" date="2001" name="Proc. Natl. Acad. Sci. U.S.A.">
        <title>Complete genome sequence of an M1 strain of Streptococcus pyogenes.</title>
        <authorList>
            <person name="Ferretti J.J."/>
            <person name="McShan W.M."/>
            <person name="Ajdic D.J."/>
            <person name="Savic D.J."/>
            <person name="Savic G."/>
            <person name="Lyon K."/>
            <person name="Primeaux C."/>
            <person name="Sezate S."/>
            <person name="Suvorov A.N."/>
            <person name="Kenton S."/>
            <person name="Lai H.S."/>
            <person name="Lin S.P."/>
            <person name="Qian Y."/>
            <person name="Jia H.G."/>
            <person name="Najar F.Z."/>
            <person name="Ren Q."/>
            <person name="Zhu H."/>
            <person name="Song L."/>
            <person name="White J."/>
            <person name="Yuan X."/>
            <person name="Clifton S.W."/>
            <person name="Roe B.A."/>
            <person name="McLaughlin R.E."/>
        </authorList>
    </citation>
    <scope>NUCLEOTIDE SEQUENCE [LARGE SCALE GENOMIC DNA]</scope>
    <source>
        <strain>ATCC 700294 / SF370 / Serotype M1</strain>
    </source>
</reference>
<reference key="2">
    <citation type="journal article" date="2005" name="J. Infect. Dis.">
        <title>Evolutionary origin and emergence of a highly successful clone of serotype M1 group A Streptococcus involved multiple horizontal gene transfer events.</title>
        <authorList>
            <person name="Sumby P."/>
            <person name="Porcella S.F."/>
            <person name="Madrigal A.G."/>
            <person name="Barbian K.D."/>
            <person name="Virtaneva K."/>
            <person name="Ricklefs S.M."/>
            <person name="Sturdevant D.E."/>
            <person name="Graham M.R."/>
            <person name="Vuopio-Varkila J."/>
            <person name="Hoe N.P."/>
            <person name="Musser J.M."/>
        </authorList>
    </citation>
    <scope>NUCLEOTIDE SEQUENCE [LARGE SCALE GENOMIC DNA]</scope>
    <source>
        <strain>ATCC BAA-947 / MGAS5005 / Serotype M1</strain>
    </source>
</reference>
<protein>
    <recommendedName>
        <fullName evidence="2">Chaperonin GroEL</fullName>
        <ecNumber evidence="2">5.6.1.7</ecNumber>
    </recommendedName>
    <alternativeName>
        <fullName evidence="2">60 kDa chaperonin</fullName>
    </alternativeName>
    <alternativeName>
        <fullName evidence="2">Chaperonin-60</fullName>
        <shortName evidence="2">Cpn60</shortName>
    </alternativeName>
</protein>
<sequence length="543" mass="57095">MAKDIKFSADARAAMVRGVDMLADTVKVTLGPKGRNVVLEKAFGSPLITNDGVTIAKEIELEDHFENMGAKLVSEVASKTNDIAGDGTTTATVLTQAIVHEGLKNVTAGANPIGIRRGIETATATAVEALKAIAQPVSGKEAIAQVAAVSSRSEKVGEYISEAMERVGNDGVITIEESRGMETELEVVEGMQFDRGYLSQYMVTDNEKMVADLENPFILITDKKVSNIQDILPLLEEVLKTNRPLLIIADDVDGEALPTLVLNKIRGTFNVVAVKAPGFGDRRKAMLEDIAILTGGTVITEDLGLELKDATMTALGQAAKITVDKDSTVIVEGSGSSEAIANRIALIKSQLETTTSDFDREKLQERLAKLAGGVAVIKVGAPTETALKEMKLRIEDALNATRAAVEEGIVAGGGTALITVIEKVAALELEGDDATGRNIVLRALEEPVRQIALNAGYEGSVVIDKLKNSPAGTGFNAATGEWVDMIKTGIIDPVKVTRSALQNAASVASLILTTEAVVANKPEPATPAPAMPAGMDPGMMGGF</sequence>
<gene>
    <name evidence="2" type="primary">groEL</name>
    <name evidence="2" type="synonym">groL</name>
    <name type="ordered locus">SPy_2070</name>
    <name type="ordered locus">M5005_Spy1761</name>
</gene>
<evidence type="ECO:0000250" key="1"/>
<evidence type="ECO:0000255" key="2">
    <source>
        <dbReference type="HAMAP-Rule" id="MF_00600"/>
    </source>
</evidence>
<comment type="function">
    <text evidence="2">Together with its co-chaperonin GroES, plays an essential role in assisting protein folding. The GroEL-GroES system forms a nano-cage that allows encapsulation of the non-native substrate proteins and provides a physical environment optimized to promote and accelerate protein folding.</text>
</comment>
<comment type="catalytic activity">
    <reaction evidence="2">
        <text>ATP + H2O + a folded polypeptide = ADP + phosphate + an unfolded polypeptide.</text>
        <dbReference type="EC" id="5.6.1.7"/>
    </reaction>
</comment>
<comment type="subunit">
    <text evidence="2">Forms a cylinder of 14 subunits composed of two heptameric rings stacked back-to-back. Interacts with the co-chaperonin GroES.</text>
</comment>
<comment type="subcellular location">
    <subcellularLocation>
        <location evidence="2">Cytoplasm</location>
    </subcellularLocation>
</comment>
<comment type="similarity">
    <text evidence="2">Belongs to the chaperonin (HSP60) family.</text>
</comment>
<accession>P69883</accession>
<accession>P82485</accession>
<accession>Q48W96</accession>
<organism>
    <name type="scientific">Streptococcus pyogenes serotype M1</name>
    <dbReference type="NCBI Taxonomy" id="301447"/>
    <lineage>
        <taxon>Bacteria</taxon>
        <taxon>Bacillati</taxon>
        <taxon>Bacillota</taxon>
        <taxon>Bacilli</taxon>
        <taxon>Lactobacillales</taxon>
        <taxon>Streptococcaceae</taxon>
        <taxon>Streptococcus</taxon>
    </lineage>
</organism>
<name>CH60_STRP1</name>
<dbReference type="EC" id="5.6.1.7" evidence="2"/>
<dbReference type="EMBL" id="AE004092">
    <property type="protein sequence ID" value="AAK34727.1"/>
    <property type="molecule type" value="Genomic_DNA"/>
</dbReference>
<dbReference type="EMBL" id="CP000017">
    <property type="protein sequence ID" value="AAZ52379.1"/>
    <property type="molecule type" value="Genomic_DNA"/>
</dbReference>
<dbReference type="RefSeq" id="NP_270006.1">
    <property type="nucleotide sequence ID" value="NC_002737.2"/>
</dbReference>
<dbReference type="SMR" id="P69883"/>
<dbReference type="PaxDb" id="1314-HKU360_01874"/>
<dbReference type="KEGG" id="spy:SPy_2070"/>
<dbReference type="KEGG" id="spz:M5005_Spy1761"/>
<dbReference type="PATRIC" id="fig|160490.10.peg.1795"/>
<dbReference type="HOGENOM" id="CLU_016503_3_0_9"/>
<dbReference type="OMA" id="TDTDKME"/>
<dbReference type="Proteomes" id="UP000000750">
    <property type="component" value="Chromosome"/>
</dbReference>
<dbReference type="GO" id="GO:0005737">
    <property type="term" value="C:cytoplasm"/>
    <property type="evidence" value="ECO:0007669"/>
    <property type="project" value="UniProtKB-SubCell"/>
</dbReference>
<dbReference type="GO" id="GO:0005524">
    <property type="term" value="F:ATP binding"/>
    <property type="evidence" value="ECO:0007669"/>
    <property type="project" value="UniProtKB-UniRule"/>
</dbReference>
<dbReference type="GO" id="GO:0140662">
    <property type="term" value="F:ATP-dependent protein folding chaperone"/>
    <property type="evidence" value="ECO:0007669"/>
    <property type="project" value="InterPro"/>
</dbReference>
<dbReference type="GO" id="GO:0016853">
    <property type="term" value="F:isomerase activity"/>
    <property type="evidence" value="ECO:0007669"/>
    <property type="project" value="UniProtKB-KW"/>
</dbReference>
<dbReference type="GO" id="GO:0051082">
    <property type="term" value="F:unfolded protein binding"/>
    <property type="evidence" value="ECO:0007669"/>
    <property type="project" value="UniProtKB-UniRule"/>
</dbReference>
<dbReference type="GO" id="GO:0042026">
    <property type="term" value="P:protein refolding"/>
    <property type="evidence" value="ECO:0007669"/>
    <property type="project" value="UniProtKB-UniRule"/>
</dbReference>
<dbReference type="CDD" id="cd03344">
    <property type="entry name" value="GroEL"/>
    <property type="match status" value="1"/>
</dbReference>
<dbReference type="FunFam" id="1.10.560.10:FF:000001">
    <property type="entry name" value="60 kDa chaperonin"/>
    <property type="match status" value="1"/>
</dbReference>
<dbReference type="FunFam" id="3.50.7.10:FF:000001">
    <property type="entry name" value="60 kDa chaperonin"/>
    <property type="match status" value="1"/>
</dbReference>
<dbReference type="Gene3D" id="3.50.7.10">
    <property type="entry name" value="GroEL"/>
    <property type="match status" value="1"/>
</dbReference>
<dbReference type="Gene3D" id="1.10.560.10">
    <property type="entry name" value="GroEL-like equatorial domain"/>
    <property type="match status" value="1"/>
</dbReference>
<dbReference type="Gene3D" id="3.30.260.10">
    <property type="entry name" value="TCP-1-like chaperonin intermediate domain"/>
    <property type="match status" value="1"/>
</dbReference>
<dbReference type="HAMAP" id="MF_00600">
    <property type="entry name" value="CH60"/>
    <property type="match status" value="1"/>
</dbReference>
<dbReference type="InterPro" id="IPR018370">
    <property type="entry name" value="Chaperonin_Cpn60_CS"/>
</dbReference>
<dbReference type="InterPro" id="IPR001844">
    <property type="entry name" value="Cpn60/GroEL"/>
</dbReference>
<dbReference type="InterPro" id="IPR002423">
    <property type="entry name" value="Cpn60/GroEL/TCP-1"/>
</dbReference>
<dbReference type="InterPro" id="IPR027409">
    <property type="entry name" value="GroEL-like_apical_dom_sf"/>
</dbReference>
<dbReference type="InterPro" id="IPR027413">
    <property type="entry name" value="GROEL-like_equatorial_sf"/>
</dbReference>
<dbReference type="InterPro" id="IPR027410">
    <property type="entry name" value="TCP-1-like_intermed_sf"/>
</dbReference>
<dbReference type="NCBIfam" id="TIGR02348">
    <property type="entry name" value="GroEL"/>
    <property type="match status" value="1"/>
</dbReference>
<dbReference type="NCBIfam" id="NF000592">
    <property type="entry name" value="PRK00013.1"/>
    <property type="match status" value="1"/>
</dbReference>
<dbReference type="NCBIfam" id="NF009487">
    <property type="entry name" value="PRK12849.1"/>
    <property type="match status" value="1"/>
</dbReference>
<dbReference type="NCBIfam" id="NF009488">
    <property type="entry name" value="PRK12850.1"/>
    <property type="match status" value="1"/>
</dbReference>
<dbReference type="NCBIfam" id="NF009489">
    <property type="entry name" value="PRK12851.1"/>
    <property type="match status" value="1"/>
</dbReference>
<dbReference type="PANTHER" id="PTHR45633">
    <property type="entry name" value="60 KDA HEAT SHOCK PROTEIN, MITOCHONDRIAL"/>
    <property type="match status" value="1"/>
</dbReference>
<dbReference type="Pfam" id="PF00118">
    <property type="entry name" value="Cpn60_TCP1"/>
    <property type="match status" value="1"/>
</dbReference>
<dbReference type="PRINTS" id="PR00298">
    <property type="entry name" value="CHAPERONIN60"/>
</dbReference>
<dbReference type="SUPFAM" id="SSF52029">
    <property type="entry name" value="GroEL apical domain-like"/>
    <property type="match status" value="1"/>
</dbReference>
<dbReference type="SUPFAM" id="SSF48592">
    <property type="entry name" value="GroEL equatorial domain-like"/>
    <property type="match status" value="1"/>
</dbReference>
<dbReference type="SUPFAM" id="SSF54849">
    <property type="entry name" value="GroEL-intermediate domain like"/>
    <property type="match status" value="1"/>
</dbReference>
<dbReference type="PROSITE" id="PS00296">
    <property type="entry name" value="CHAPERONINS_CPN60"/>
    <property type="match status" value="1"/>
</dbReference>
<keyword id="KW-0067">ATP-binding</keyword>
<keyword id="KW-0143">Chaperone</keyword>
<keyword id="KW-0963">Cytoplasm</keyword>
<keyword id="KW-0413">Isomerase</keyword>
<keyword id="KW-0547">Nucleotide-binding</keyword>
<keyword id="KW-1185">Reference proteome</keyword>
<keyword id="KW-0346">Stress response</keyword>
<proteinExistence type="inferred from homology"/>
<feature type="initiator methionine" description="Removed" evidence="1">
    <location>
        <position position="1"/>
    </location>
</feature>
<feature type="chain" id="PRO_0000063558" description="Chaperonin GroEL">
    <location>
        <begin position="2"/>
        <end position="543"/>
    </location>
</feature>
<feature type="binding site" evidence="2">
    <location>
        <begin position="29"/>
        <end position="32"/>
    </location>
    <ligand>
        <name>ATP</name>
        <dbReference type="ChEBI" id="CHEBI:30616"/>
    </ligand>
</feature>
<feature type="binding site" evidence="2">
    <location>
        <begin position="86"/>
        <end position="90"/>
    </location>
    <ligand>
        <name>ATP</name>
        <dbReference type="ChEBI" id="CHEBI:30616"/>
    </ligand>
</feature>
<feature type="binding site" evidence="2">
    <location>
        <position position="413"/>
    </location>
    <ligand>
        <name>ATP</name>
        <dbReference type="ChEBI" id="CHEBI:30616"/>
    </ligand>
</feature>
<feature type="binding site" evidence="2">
    <location>
        <begin position="476"/>
        <end position="478"/>
    </location>
    <ligand>
        <name>ATP</name>
        <dbReference type="ChEBI" id="CHEBI:30616"/>
    </ligand>
</feature>
<feature type="binding site" evidence="2">
    <location>
        <position position="492"/>
    </location>
    <ligand>
        <name>ATP</name>
        <dbReference type="ChEBI" id="CHEBI:30616"/>
    </ligand>
</feature>